<name>NS1_PAVHU</name>
<gene>
    <name type="primary">NS1</name>
</gene>
<comment type="function">
    <text evidence="2">Multifunctional protein essential for viral DNA replication, which cooperatively interacts with the viral DNA origin of replication and transactivates several promoters including the viral p6 promoter. Binds the origin of replication and performs an endonucleolytic nick within a conserved sequence in the viral genome, thereby initiating the rolling circle replication (RCR). Participates in the transcriptional regulation the viral p6 promoter that regulates all viral transcripts and the cellular CDN1A or IL6 promoters. Transactivates several host promoters some of which induce the S cell cycle phase for the production of host replicative proteins. Up-regulates the expression of host E2F4 and E2F5 and interacts with both these factors thereby inhibiting the host cell cycle G2/M transition. This arrest promotes apoptosis for viral release.</text>
</comment>
<comment type="catalytic activity">
    <reaction evidence="2">
        <text>ATP + H2O = ADP + phosphate + H(+)</text>
        <dbReference type="Rhea" id="RHEA:13065"/>
        <dbReference type="ChEBI" id="CHEBI:15377"/>
        <dbReference type="ChEBI" id="CHEBI:15378"/>
        <dbReference type="ChEBI" id="CHEBI:30616"/>
        <dbReference type="ChEBI" id="CHEBI:43474"/>
        <dbReference type="ChEBI" id="CHEBI:456216"/>
        <dbReference type="EC" id="3.6.4.12"/>
    </reaction>
</comment>
<comment type="cofactor">
    <cofactor evidence="2">
        <name>Mn(2+)</name>
        <dbReference type="ChEBI" id="CHEBI:29035"/>
    </cofactor>
    <text evidence="2">The endonuclease active site can probably bind other divalent cations.</text>
</comment>
<comment type="subunit">
    <text evidence="2">Homooligomer; when bound to DNA. Interacts with host E2F4 and E2F5; these interactions promote the nuclear import of E2F4 and E2F5 and the G2/M block observed in host cells. Interacts with host transcription factor SP1; this interaction is important for NS1 transcriptional regulation of p21/WAF1. Interacts with host transcription factor SP3.</text>
</comment>
<comment type="subcellular location">
    <subcellularLocation>
        <location evidence="2">Host nucleus</location>
    </subcellularLocation>
</comment>
<comment type="domain">
    <text evidence="2">In the N-terminus, the endonuclease region is involved in binding to the origin of replication on the viral DNA as well as to the overlapping viral promoter p6. In the middle, there are the ATPase and helicase activities. The C-terminus probably contains a transactivation domain.</text>
</comment>
<comment type="similarity">
    <text evidence="6">Belongs to the parvoviruses initiator protein NS1 family.</text>
</comment>
<proteinExistence type="inferred from homology"/>
<accession>P07298</accession>
<reference key="1">
    <citation type="journal article" date="1986" name="J. Virol.">
        <title>Nucleotide sequence and genome organization of human parvovirus B19 isolated from the serum of a child during aplastic crisis.</title>
        <authorList>
            <person name="Shade R.O."/>
            <person name="Blundell M.C."/>
            <person name="Cotmore S.F."/>
            <person name="Tattersall P."/>
            <person name="Astell C.R."/>
        </authorList>
    </citation>
    <scope>NUCLEOTIDE SEQUENCE [GENOMIC DNA]</scope>
</reference>
<evidence type="ECO:0000250" key="1">
    <source>
        <dbReference type="UniProtKB" id="P03134"/>
    </source>
</evidence>
<evidence type="ECO:0000250" key="2">
    <source>
        <dbReference type="UniProtKB" id="Q9PZT1"/>
    </source>
</evidence>
<evidence type="ECO:0000255" key="3">
    <source>
        <dbReference type="PROSITE-ProRule" id="PRU00551"/>
    </source>
</evidence>
<evidence type="ECO:0000255" key="4">
    <source>
        <dbReference type="PROSITE-ProRule" id="PRU01366"/>
    </source>
</evidence>
<evidence type="ECO:0000256" key="5">
    <source>
        <dbReference type="SAM" id="MobiDB-lite"/>
    </source>
</evidence>
<evidence type="ECO:0000305" key="6"/>
<organismHost>
    <name type="scientific">Homo sapiens</name>
    <name type="common">Human</name>
    <dbReference type="NCBI Taxonomy" id="9606"/>
</organismHost>
<keyword id="KW-0067">ATP-binding</keyword>
<keyword id="KW-0190">Covalent protein-DNA linkage</keyword>
<keyword id="KW-0235">DNA replication</keyword>
<keyword id="KW-0238">DNA-binding</keyword>
<keyword id="KW-0255">Endonuclease</keyword>
<keyword id="KW-0347">Helicase</keyword>
<keyword id="KW-1079">Host G2/M cell cycle arrest by virus</keyword>
<keyword id="KW-1048">Host nucleus</keyword>
<keyword id="KW-0945">Host-virus interaction</keyword>
<keyword id="KW-0378">Hydrolase</keyword>
<keyword id="KW-0460">Magnesium</keyword>
<keyword id="KW-0464">Manganese</keyword>
<keyword id="KW-0479">Metal-binding</keyword>
<keyword id="KW-1119">Modulation of host cell apoptosis by virus</keyword>
<keyword id="KW-1121">Modulation of host cell cycle by virus</keyword>
<keyword id="KW-0511">Multifunctional enzyme</keyword>
<keyword id="KW-0540">Nuclease</keyword>
<keyword id="KW-0547">Nucleotide-binding</keyword>
<keyword id="KW-0804">Transcription</keyword>
<keyword id="KW-0805">Transcription regulation</keyword>
<keyword id="KW-1194">Viral DNA replication</keyword>
<protein>
    <recommendedName>
        <fullName evidence="1">Initiator protein NS1</fullName>
        <shortName>NS1</shortName>
        <ecNumber evidence="2">3.1.21.-</ecNumber>
        <ecNumber evidence="2">3.6.4.12</ecNumber>
    </recommendedName>
    <alternativeName>
        <fullName>NCVP1</fullName>
    </alternativeName>
    <alternativeName>
        <fullName>Non-capsid protein NS-1</fullName>
    </alternativeName>
    <alternativeName>
        <fullName>Non-structural protein 1</fullName>
    </alternativeName>
    <alternativeName>
        <fullName>Non-structural protein NS1</fullName>
    </alternativeName>
</protein>
<dbReference type="EC" id="3.1.21.-" evidence="2"/>
<dbReference type="EC" id="3.6.4.12" evidence="2"/>
<dbReference type="EMBL" id="M13178">
    <property type="protein sequence ID" value="AAA66866.1"/>
    <property type="molecule type" value="Genomic_DNA"/>
</dbReference>
<dbReference type="PIR" id="B24299">
    <property type="entry name" value="UYPV19"/>
</dbReference>
<dbReference type="SMR" id="P07298"/>
<dbReference type="ABCD" id="P07298">
    <property type="antibodies" value="1 sequenced antibody"/>
</dbReference>
<dbReference type="Proteomes" id="UP000008027">
    <property type="component" value="Genome"/>
</dbReference>
<dbReference type="GO" id="GO:0042025">
    <property type="term" value="C:host cell nucleus"/>
    <property type="evidence" value="ECO:0007669"/>
    <property type="project" value="UniProtKB-SubCell"/>
</dbReference>
<dbReference type="GO" id="GO:0005524">
    <property type="term" value="F:ATP binding"/>
    <property type="evidence" value="ECO:0007669"/>
    <property type="project" value="UniProtKB-KW"/>
</dbReference>
<dbReference type="GO" id="GO:0016887">
    <property type="term" value="F:ATP hydrolysis activity"/>
    <property type="evidence" value="ECO:0007669"/>
    <property type="project" value="RHEA"/>
</dbReference>
<dbReference type="GO" id="GO:0003677">
    <property type="term" value="F:DNA binding"/>
    <property type="evidence" value="ECO:0007669"/>
    <property type="project" value="UniProtKB-KW"/>
</dbReference>
<dbReference type="GO" id="GO:0004519">
    <property type="term" value="F:endonuclease activity"/>
    <property type="evidence" value="ECO:0007669"/>
    <property type="project" value="UniProtKB-KW"/>
</dbReference>
<dbReference type="GO" id="GO:0004386">
    <property type="term" value="F:helicase activity"/>
    <property type="evidence" value="ECO:0007669"/>
    <property type="project" value="UniProtKB-KW"/>
</dbReference>
<dbReference type="GO" id="GO:0046872">
    <property type="term" value="F:metal ion binding"/>
    <property type="evidence" value="ECO:0007669"/>
    <property type="project" value="UniProtKB-KW"/>
</dbReference>
<dbReference type="GO" id="GO:0006260">
    <property type="term" value="P:DNA replication"/>
    <property type="evidence" value="ECO:0007669"/>
    <property type="project" value="UniProtKB-KW"/>
</dbReference>
<dbReference type="GO" id="GO:0039592">
    <property type="term" value="P:symbiont-mediated arrest of host cell cycle during G2/M transition"/>
    <property type="evidence" value="ECO:0007669"/>
    <property type="project" value="UniProtKB-KW"/>
</dbReference>
<dbReference type="GO" id="GO:0052150">
    <property type="term" value="P:symbiont-mediated perturbation of host apoptosis"/>
    <property type="evidence" value="ECO:0007669"/>
    <property type="project" value="UniProtKB-KW"/>
</dbReference>
<dbReference type="GO" id="GO:0039693">
    <property type="term" value="P:viral DNA genome replication"/>
    <property type="evidence" value="ECO:0007669"/>
    <property type="project" value="UniProtKB-KW"/>
</dbReference>
<dbReference type="FunFam" id="3.40.1310.20:FF:000006">
    <property type="entry name" value="Initiator protein NS1"/>
    <property type="match status" value="1"/>
</dbReference>
<dbReference type="Gene3D" id="3.40.1310.20">
    <property type="match status" value="1"/>
</dbReference>
<dbReference type="Gene3D" id="3.40.50.300">
    <property type="entry name" value="P-loop containing nucleotide triphosphate hydrolases"/>
    <property type="match status" value="1"/>
</dbReference>
<dbReference type="InterPro" id="IPR014015">
    <property type="entry name" value="Helicase_SF3_DNA-vir"/>
</dbReference>
<dbReference type="InterPro" id="IPR014835">
    <property type="entry name" value="NS1-Nuc"/>
</dbReference>
<dbReference type="InterPro" id="IPR027417">
    <property type="entry name" value="P-loop_NTPase"/>
</dbReference>
<dbReference type="InterPro" id="IPR001257">
    <property type="entry name" value="Parvovirus_NS1_helicase"/>
</dbReference>
<dbReference type="InterPro" id="IPR049901">
    <property type="entry name" value="PV_NS1-NUC"/>
</dbReference>
<dbReference type="Pfam" id="PF01057">
    <property type="entry name" value="Parvo_NS1"/>
    <property type="match status" value="1"/>
</dbReference>
<dbReference type="Pfam" id="PF08724">
    <property type="entry name" value="Rep_N"/>
    <property type="match status" value="1"/>
</dbReference>
<dbReference type="SUPFAM" id="SSF55464">
    <property type="entry name" value="Origin of replication-binding domain, RBD-like"/>
    <property type="match status" value="1"/>
</dbReference>
<dbReference type="SUPFAM" id="SSF52540">
    <property type="entry name" value="P-loop containing nucleoside triphosphate hydrolases"/>
    <property type="match status" value="1"/>
</dbReference>
<dbReference type="PROSITE" id="PS52022">
    <property type="entry name" value="PV_NS1_NUC"/>
    <property type="match status" value="1"/>
</dbReference>
<dbReference type="PROSITE" id="PS51206">
    <property type="entry name" value="SF3_HELICASE_1"/>
    <property type="match status" value="1"/>
</dbReference>
<feature type="chain" id="PRO_0000222467" description="Initiator protein NS1">
    <location>
        <begin position="1"/>
        <end position="671"/>
    </location>
</feature>
<feature type="domain" description="PV NS1-Nuc" evidence="4">
    <location>
        <begin position="1"/>
        <end position="186"/>
    </location>
</feature>
<feature type="domain" description="SF3 helicase" evidence="3">
    <location>
        <begin position="302"/>
        <end position="457"/>
    </location>
</feature>
<feature type="region of interest" description="Endonuclease" evidence="2">
    <location>
        <begin position="1"/>
        <end position="176"/>
    </location>
</feature>
<feature type="region of interest" description="Disordered" evidence="5">
    <location>
        <begin position="532"/>
        <end position="554"/>
    </location>
</feature>
<feature type="short sequence motif" description="RCR-2" evidence="4">
    <location>
        <begin position="81"/>
        <end position="83"/>
    </location>
</feature>
<feature type="short sequence motif" description="RCR-3" evidence="4">
    <location>
        <begin position="141"/>
        <end position="145"/>
    </location>
</feature>
<feature type="short sequence motif" description="Nuclear localization signal" evidence="2">
    <location>
        <begin position="177"/>
        <end position="180"/>
    </location>
</feature>
<feature type="compositionally biased region" description="Polar residues" evidence="5">
    <location>
        <begin position="533"/>
        <end position="552"/>
    </location>
</feature>
<feature type="active site" description="For nuclease activity" evidence="4">
    <location>
        <position position="141"/>
    </location>
</feature>
<feature type="binding site" evidence="4">
    <location>
        <position position="72"/>
    </location>
    <ligand>
        <name>a divalent metal cation</name>
        <dbReference type="ChEBI" id="CHEBI:60240"/>
    </ligand>
</feature>
<feature type="binding site" evidence="4">
    <location>
        <position position="81"/>
    </location>
    <ligand>
        <name>a divalent metal cation</name>
        <dbReference type="ChEBI" id="CHEBI:60240"/>
    </ligand>
</feature>
<feature type="binding site" evidence="4">
    <location>
        <position position="83"/>
    </location>
    <ligand>
        <name>a divalent metal cation</name>
        <dbReference type="ChEBI" id="CHEBI:60240"/>
    </ligand>
</feature>
<feature type="binding site" evidence="3">
    <location>
        <begin position="328"/>
        <end position="335"/>
    </location>
    <ligand>
        <name>ATP</name>
        <dbReference type="ChEBI" id="CHEBI:30616"/>
    </ligand>
</feature>
<sequence>MELFRGVLQVSSNVLDCANDNWWCSLLDLDTSDWEPLTHTNRLMAIYLSSVASKLDFTGGPLAGCLYFFQVECNKFEEGYHIHVVTGGPGLNPRNLTVCVEGLFNNVLYHLVTENVKLKFLPGMTTKGKYFRDGEQFIENYLMKKIPLNVVWCVTNIDGYIDTCISATFRRGACHAKKPRITTAINDTSSDAGESSGTGAEVVPFNGKGTKASIKFQTMVNWLCENRVFTEDKWKLVDFNQYTLLSSSHSGSFQIQSALKLAIYKATNLVPTSTFLLHTDFEQVMCIKDNKIVKLLLCQNYDPLLVGQHVLKWIDKKCGKKNTLWFYGPPSTGKTNLAMAIAKSVPVYGMVNWNNENFPFNDVAGKSLVVWDEGIIKSTIVEAAKAILGGQPTRVDQKMRGSVAVPGVPVVITSNGDITFVVSGNTTTTVHAKALKERMVKLNFTVRCSPDMGLLTEADVQQWLTWCNAQSWDHYENWAINYTFDFPGINADALHPDLQTTPIVTDTSISSSGGESSEELSESSFFNLITPGAWNTETPRSSTPIPGTSSGESFVGSPVSSEVVAASWEEAFYTPLADQFRELLVGVDYVWDGVRGLPVCCVQHINNSGGGLGLCPHCINVGAWYNGWKFREFTPDLVRCSCHVGASNPFSVLTCKKCAYLSGLQSFVDYE</sequence>
<organism>
    <name type="scientific">Human parvovirus B19 (isolate AU)</name>
    <name type="common">HPV B19</name>
    <dbReference type="NCBI Taxonomy" id="648238"/>
    <lineage>
        <taxon>Viruses</taxon>
        <taxon>Monodnaviria</taxon>
        <taxon>Shotokuvirae</taxon>
        <taxon>Cossaviricota</taxon>
        <taxon>Quintoviricetes</taxon>
        <taxon>Piccovirales</taxon>
        <taxon>Parvoviridae</taxon>
        <taxon>Parvovirinae</taxon>
        <taxon>Erythroparvovirus</taxon>
        <taxon>Erythroparvovirus primate1</taxon>
    </lineage>
</organism>